<protein>
    <recommendedName>
        <fullName evidence="1">Biotin synthase</fullName>
        <ecNumber evidence="1">2.8.1.6</ecNumber>
    </recommendedName>
</protein>
<evidence type="ECO:0000255" key="1">
    <source>
        <dbReference type="HAMAP-Rule" id="MF_01694"/>
    </source>
</evidence>
<evidence type="ECO:0000255" key="2">
    <source>
        <dbReference type="PROSITE-ProRule" id="PRU01266"/>
    </source>
</evidence>
<evidence type="ECO:0000305" key="3"/>
<organism>
    <name type="scientific">Methylacidiphilum infernorum (isolate V4)</name>
    <name type="common">Methylokorus infernorum (strain V4)</name>
    <dbReference type="NCBI Taxonomy" id="481448"/>
    <lineage>
        <taxon>Bacteria</taxon>
        <taxon>Pseudomonadati</taxon>
        <taxon>Verrucomicrobiota</taxon>
        <taxon>Methylacidiphilae</taxon>
        <taxon>Methylacidiphilales</taxon>
        <taxon>Methylacidiphilaceae</taxon>
        <taxon>Methylacidiphilum (ex Ratnadevi et al. 2023)</taxon>
    </lineage>
</organism>
<gene>
    <name evidence="1" type="primary">bioB</name>
    <name type="ordered locus">Minf_1134</name>
</gene>
<dbReference type="EC" id="2.8.1.6" evidence="1"/>
<dbReference type="EMBL" id="CP000975">
    <property type="protein sequence ID" value="ACD83189.1"/>
    <property type="status" value="ALT_INIT"/>
    <property type="molecule type" value="Genomic_DNA"/>
</dbReference>
<dbReference type="RefSeq" id="WP_048810166.1">
    <property type="nucleotide sequence ID" value="NC_010794.1"/>
</dbReference>
<dbReference type="SMR" id="B3DV36"/>
<dbReference type="STRING" id="481448.Minf_1134"/>
<dbReference type="KEGG" id="min:Minf_1134"/>
<dbReference type="eggNOG" id="COG0502">
    <property type="taxonomic scope" value="Bacteria"/>
</dbReference>
<dbReference type="HOGENOM" id="CLU_033172_1_2_0"/>
<dbReference type="OrthoDB" id="9786826at2"/>
<dbReference type="UniPathway" id="UPA00078">
    <property type="reaction ID" value="UER00162"/>
</dbReference>
<dbReference type="Proteomes" id="UP000009149">
    <property type="component" value="Chromosome"/>
</dbReference>
<dbReference type="GO" id="GO:0051537">
    <property type="term" value="F:2 iron, 2 sulfur cluster binding"/>
    <property type="evidence" value="ECO:0007669"/>
    <property type="project" value="UniProtKB-KW"/>
</dbReference>
<dbReference type="GO" id="GO:0051539">
    <property type="term" value="F:4 iron, 4 sulfur cluster binding"/>
    <property type="evidence" value="ECO:0007669"/>
    <property type="project" value="UniProtKB-KW"/>
</dbReference>
<dbReference type="GO" id="GO:0004076">
    <property type="term" value="F:biotin synthase activity"/>
    <property type="evidence" value="ECO:0007669"/>
    <property type="project" value="UniProtKB-UniRule"/>
</dbReference>
<dbReference type="GO" id="GO:0005506">
    <property type="term" value="F:iron ion binding"/>
    <property type="evidence" value="ECO:0007669"/>
    <property type="project" value="UniProtKB-UniRule"/>
</dbReference>
<dbReference type="GO" id="GO:0009102">
    <property type="term" value="P:biotin biosynthetic process"/>
    <property type="evidence" value="ECO:0007669"/>
    <property type="project" value="UniProtKB-UniRule"/>
</dbReference>
<dbReference type="CDD" id="cd01335">
    <property type="entry name" value="Radical_SAM"/>
    <property type="match status" value="1"/>
</dbReference>
<dbReference type="Gene3D" id="3.20.20.70">
    <property type="entry name" value="Aldolase class I"/>
    <property type="match status" value="1"/>
</dbReference>
<dbReference type="HAMAP" id="MF_01694">
    <property type="entry name" value="BioB"/>
    <property type="match status" value="1"/>
</dbReference>
<dbReference type="InterPro" id="IPR013785">
    <property type="entry name" value="Aldolase_TIM"/>
</dbReference>
<dbReference type="InterPro" id="IPR010722">
    <property type="entry name" value="BATS_dom"/>
</dbReference>
<dbReference type="InterPro" id="IPR002684">
    <property type="entry name" value="Biotin_synth/BioAB"/>
</dbReference>
<dbReference type="InterPro" id="IPR024177">
    <property type="entry name" value="Biotin_synthase"/>
</dbReference>
<dbReference type="InterPro" id="IPR006638">
    <property type="entry name" value="Elp3/MiaA/NifB-like_rSAM"/>
</dbReference>
<dbReference type="InterPro" id="IPR007197">
    <property type="entry name" value="rSAM"/>
</dbReference>
<dbReference type="NCBIfam" id="TIGR00433">
    <property type="entry name" value="bioB"/>
    <property type="match status" value="1"/>
</dbReference>
<dbReference type="PANTHER" id="PTHR22976">
    <property type="entry name" value="BIOTIN SYNTHASE"/>
    <property type="match status" value="1"/>
</dbReference>
<dbReference type="PANTHER" id="PTHR22976:SF2">
    <property type="entry name" value="BIOTIN SYNTHASE, MITOCHONDRIAL"/>
    <property type="match status" value="1"/>
</dbReference>
<dbReference type="Pfam" id="PF06968">
    <property type="entry name" value="BATS"/>
    <property type="match status" value="1"/>
</dbReference>
<dbReference type="Pfam" id="PF04055">
    <property type="entry name" value="Radical_SAM"/>
    <property type="match status" value="1"/>
</dbReference>
<dbReference type="PIRSF" id="PIRSF001619">
    <property type="entry name" value="Biotin_synth"/>
    <property type="match status" value="1"/>
</dbReference>
<dbReference type="SFLD" id="SFLDF00272">
    <property type="entry name" value="biotin_synthase"/>
    <property type="match status" value="1"/>
</dbReference>
<dbReference type="SFLD" id="SFLDS00029">
    <property type="entry name" value="Radical_SAM"/>
    <property type="match status" value="1"/>
</dbReference>
<dbReference type="SMART" id="SM00876">
    <property type="entry name" value="BATS"/>
    <property type="match status" value="1"/>
</dbReference>
<dbReference type="SMART" id="SM00729">
    <property type="entry name" value="Elp3"/>
    <property type="match status" value="1"/>
</dbReference>
<dbReference type="SUPFAM" id="SSF102114">
    <property type="entry name" value="Radical SAM enzymes"/>
    <property type="match status" value="1"/>
</dbReference>
<dbReference type="PROSITE" id="PS51918">
    <property type="entry name" value="RADICAL_SAM"/>
    <property type="match status" value="1"/>
</dbReference>
<name>BIOB_METI4</name>
<feature type="chain" id="PRO_0000381462" description="Biotin synthase">
    <location>
        <begin position="1"/>
        <end position="311"/>
    </location>
</feature>
<feature type="domain" description="Radical SAM core" evidence="2">
    <location>
        <begin position="32"/>
        <end position="258"/>
    </location>
</feature>
<feature type="binding site" evidence="1">
    <location>
        <position position="47"/>
    </location>
    <ligand>
        <name>[4Fe-4S] cluster</name>
        <dbReference type="ChEBI" id="CHEBI:49883"/>
        <note>4Fe-4S-S-AdoMet</note>
    </ligand>
</feature>
<feature type="binding site" evidence="1">
    <location>
        <position position="51"/>
    </location>
    <ligand>
        <name>[4Fe-4S] cluster</name>
        <dbReference type="ChEBI" id="CHEBI:49883"/>
        <note>4Fe-4S-S-AdoMet</note>
    </ligand>
</feature>
<feature type="binding site" evidence="1">
    <location>
        <position position="54"/>
    </location>
    <ligand>
        <name>[4Fe-4S] cluster</name>
        <dbReference type="ChEBI" id="CHEBI:49883"/>
        <note>4Fe-4S-S-AdoMet</note>
    </ligand>
</feature>
<feature type="binding site" evidence="1">
    <location>
        <position position="91"/>
    </location>
    <ligand>
        <name>[2Fe-2S] cluster</name>
        <dbReference type="ChEBI" id="CHEBI:190135"/>
    </ligand>
</feature>
<feature type="binding site" evidence="1">
    <location>
        <position position="124"/>
    </location>
    <ligand>
        <name>[2Fe-2S] cluster</name>
        <dbReference type="ChEBI" id="CHEBI:190135"/>
    </ligand>
</feature>
<feature type="binding site" evidence="1">
    <location>
        <position position="184"/>
    </location>
    <ligand>
        <name>[2Fe-2S] cluster</name>
        <dbReference type="ChEBI" id="CHEBI:190135"/>
    </ligand>
</feature>
<feature type="binding site" evidence="1">
    <location>
        <position position="256"/>
    </location>
    <ligand>
        <name>[2Fe-2S] cluster</name>
        <dbReference type="ChEBI" id="CHEBI:190135"/>
    </ligand>
</feature>
<keyword id="KW-0001">2Fe-2S</keyword>
<keyword id="KW-0004">4Fe-4S</keyword>
<keyword id="KW-0093">Biotin biosynthesis</keyword>
<keyword id="KW-0408">Iron</keyword>
<keyword id="KW-0411">Iron-sulfur</keyword>
<keyword id="KW-0479">Metal-binding</keyword>
<keyword id="KW-0949">S-adenosyl-L-methionine</keyword>
<keyword id="KW-0808">Transferase</keyword>
<proteinExistence type="inferred from homology"/>
<accession>B3DV36</accession>
<sequence>MKDYCAIEQIYHRPLDELLGEALQAKKLSGRNGVQFCQLLNIKSGGCSEDCKYCAQSAHYRTPIEKGALLDEEEILQAGLQAKEKGASRFCLGAAWRGLFEGETKTKKICKIISKISSLGMELCLSAGFLTEKTALMLKESGLKVYNHNLNTGPSYYPRIASTHRFEDRLQTIRIVQKVGLKLCSGGIIGMGERLKDRLEMLFCLYSLPEAPESIPINVYMPIEGTPFYGTPPLDYMDLIRMIATTRILFPLSRIRLAAGRKLLDEKTLTLCYLAGVDSIFIGEKLLTQSNVQLEKDYALLKKLNLRKEER</sequence>
<reference key="1">
    <citation type="journal article" date="2008" name="Biol. Direct">
        <title>Complete genome sequence of the extremely acidophilic methanotroph isolate V4, Methylacidiphilum infernorum, a representative of the bacterial phylum Verrucomicrobia.</title>
        <authorList>
            <person name="Hou S."/>
            <person name="Makarova K.S."/>
            <person name="Saw J.H."/>
            <person name="Senin P."/>
            <person name="Ly B.V."/>
            <person name="Zhou Z."/>
            <person name="Ren Y."/>
            <person name="Wang J."/>
            <person name="Galperin M.Y."/>
            <person name="Omelchenko M.V."/>
            <person name="Wolf Y.I."/>
            <person name="Yutin N."/>
            <person name="Koonin E.V."/>
            <person name="Stott M.B."/>
            <person name="Mountain B.W."/>
            <person name="Crowe M.A."/>
            <person name="Smirnova A.V."/>
            <person name="Dunfield P.F."/>
            <person name="Feng L."/>
            <person name="Wang L."/>
            <person name="Alam M."/>
        </authorList>
    </citation>
    <scope>NUCLEOTIDE SEQUENCE [LARGE SCALE GENOMIC DNA]</scope>
    <source>
        <strain>Isolate V4</strain>
    </source>
</reference>
<comment type="function">
    <text evidence="1">Catalyzes the conversion of dethiobiotin (DTB) to biotin by the insertion of a sulfur atom into dethiobiotin via a radical-based mechanism.</text>
</comment>
<comment type="catalytic activity">
    <reaction evidence="1">
        <text>(4R,5S)-dethiobiotin + (sulfur carrier)-SH + 2 reduced [2Fe-2S]-[ferredoxin] + 2 S-adenosyl-L-methionine = (sulfur carrier)-H + biotin + 2 5'-deoxyadenosine + 2 L-methionine + 2 oxidized [2Fe-2S]-[ferredoxin]</text>
        <dbReference type="Rhea" id="RHEA:22060"/>
        <dbReference type="Rhea" id="RHEA-COMP:10000"/>
        <dbReference type="Rhea" id="RHEA-COMP:10001"/>
        <dbReference type="Rhea" id="RHEA-COMP:14737"/>
        <dbReference type="Rhea" id="RHEA-COMP:14739"/>
        <dbReference type="ChEBI" id="CHEBI:17319"/>
        <dbReference type="ChEBI" id="CHEBI:29917"/>
        <dbReference type="ChEBI" id="CHEBI:33737"/>
        <dbReference type="ChEBI" id="CHEBI:33738"/>
        <dbReference type="ChEBI" id="CHEBI:57586"/>
        <dbReference type="ChEBI" id="CHEBI:57844"/>
        <dbReference type="ChEBI" id="CHEBI:59789"/>
        <dbReference type="ChEBI" id="CHEBI:64428"/>
        <dbReference type="ChEBI" id="CHEBI:149473"/>
        <dbReference type="EC" id="2.8.1.6"/>
    </reaction>
</comment>
<comment type="cofactor">
    <cofactor evidence="1">
        <name>[4Fe-4S] cluster</name>
        <dbReference type="ChEBI" id="CHEBI:49883"/>
    </cofactor>
    <text evidence="1">Binds 1 [4Fe-4S] cluster. The cluster is coordinated with 3 cysteines and an exchangeable S-adenosyl-L-methionine.</text>
</comment>
<comment type="cofactor">
    <cofactor evidence="1">
        <name>[2Fe-2S] cluster</name>
        <dbReference type="ChEBI" id="CHEBI:190135"/>
    </cofactor>
    <text evidence="1">Binds 1 [2Fe-2S] cluster. The cluster is coordinated with 3 cysteines and 1 arginine.</text>
</comment>
<comment type="pathway">
    <text evidence="1">Cofactor biosynthesis; biotin biosynthesis; biotin from 7,8-diaminononanoate: step 2/2.</text>
</comment>
<comment type="subunit">
    <text evidence="1">Homodimer.</text>
</comment>
<comment type="similarity">
    <text evidence="1">Belongs to the radical SAM superfamily. Biotin synthase family.</text>
</comment>
<comment type="sequence caution" evidence="3">
    <conflict type="erroneous initiation">
        <sequence resource="EMBL-CDS" id="ACD83189"/>
    </conflict>
</comment>